<protein>
    <recommendedName>
        <fullName>Ankyrin repeat protein OPG003</fullName>
    </recommendedName>
</protein>
<organismHost>
    <name type="scientific">Homo sapiens</name>
    <name type="common">Human</name>
    <dbReference type="NCBI Taxonomy" id="9606"/>
</organismHost>
<comment type="function">
    <text>May be involved in virus-host protein interaction through the ankyrin repeats and PRANC regions.</text>
</comment>
<comment type="domain">
    <text evidence="1">Ankyrin repeats may mediate protein-protein interactions.</text>
</comment>
<comment type="domain">
    <text evidence="1">PRANC (Pox proteins Repeats of ANkyrin, C-terminal) region is found on many poxvirus ankyrin proteins, and is related to F-box motifs involved in protein-protein interactions.</text>
</comment>
<comment type="similarity">
    <text evidence="2">Belongs to the orthopoxvirus OPG003 family.</text>
</comment>
<proteinExistence type="inferred from homology"/>
<gene>
    <name type="primary">OPG003</name>
    <name type="synonym">G3R</name>
</gene>
<keyword id="KW-0040">ANK repeat</keyword>
<keyword id="KW-1185">Reference proteome</keyword>
<keyword id="KW-0677">Repeat</keyword>
<dbReference type="EMBL" id="X69198">
    <property type="protein sequence ID" value="CAA49136.1"/>
    <property type="molecule type" value="Genomic_DNA"/>
</dbReference>
<dbReference type="PIR" id="C36858">
    <property type="entry name" value="C36858"/>
</dbReference>
<dbReference type="PIR" id="T28622">
    <property type="entry name" value="T28622"/>
</dbReference>
<dbReference type="RefSeq" id="NP_042239.1">
    <property type="nucleotide sequence ID" value="NC_001611.1"/>
</dbReference>
<dbReference type="SMR" id="Q76QY7"/>
<dbReference type="GeneID" id="1486426"/>
<dbReference type="KEGG" id="vg:1486426"/>
<dbReference type="Proteomes" id="UP000002060">
    <property type="component" value="Segment"/>
</dbReference>
<dbReference type="GO" id="GO:0042025">
    <property type="term" value="C:host cell nucleus"/>
    <property type="evidence" value="ECO:0000314"/>
    <property type="project" value="UniProt"/>
</dbReference>
<dbReference type="GO" id="GO:0140311">
    <property type="term" value="F:protein sequestering activity"/>
    <property type="evidence" value="ECO:0000314"/>
    <property type="project" value="UniProt"/>
</dbReference>
<dbReference type="GO" id="GO:0085034">
    <property type="term" value="P:symbiont-mediated suppression of host NF-kappaB cascade"/>
    <property type="evidence" value="ECO:0000314"/>
    <property type="project" value="UniProt"/>
</dbReference>
<dbReference type="Gene3D" id="1.25.40.20">
    <property type="entry name" value="Ankyrin repeat-containing domain"/>
    <property type="match status" value="2"/>
</dbReference>
<dbReference type="InterPro" id="IPR002110">
    <property type="entry name" value="Ankyrin_rpt"/>
</dbReference>
<dbReference type="InterPro" id="IPR036770">
    <property type="entry name" value="Ankyrin_rpt-contain_sf"/>
</dbReference>
<dbReference type="InterPro" id="IPR018272">
    <property type="entry name" value="PRANC_domain"/>
</dbReference>
<dbReference type="PANTHER" id="PTHR24198">
    <property type="entry name" value="ANKYRIN REPEAT AND PROTEIN KINASE DOMAIN-CONTAINING PROTEIN"/>
    <property type="match status" value="1"/>
</dbReference>
<dbReference type="PANTHER" id="PTHR24198:SF165">
    <property type="entry name" value="ANKYRIN REPEAT-CONTAINING PROTEIN-RELATED"/>
    <property type="match status" value="1"/>
</dbReference>
<dbReference type="Pfam" id="PF00023">
    <property type="entry name" value="Ank"/>
    <property type="match status" value="1"/>
</dbReference>
<dbReference type="Pfam" id="PF09372">
    <property type="entry name" value="PRANC"/>
    <property type="match status" value="1"/>
</dbReference>
<dbReference type="SMART" id="SM00248">
    <property type="entry name" value="ANK"/>
    <property type="match status" value="6"/>
</dbReference>
<dbReference type="SUPFAM" id="SSF48403">
    <property type="entry name" value="Ankyrin repeat"/>
    <property type="match status" value="2"/>
</dbReference>
<dbReference type="PROSITE" id="PS50297">
    <property type="entry name" value="ANK_REP_REGION"/>
    <property type="match status" value="1"/>
</dbReference>
<dbReference type="PROSITE" id="PS50088">
    <property type="entry name" value="ANK_REPEAT"/>
    <property type="match status" value="2"/>
</dbReference>
<feature type="chain" id="PRO_0000412982" description="Ankyrin repeat protein OPG003">
    <location>
        <begin position="1"/>
        <end position="585"/>
    </location>
</feature>
<feature type="repeat" description="ANK 1">
    <location>
        <begin position="66"/>
        <end position="98"/>
    </location>
</feature>
<feature type="repeat" description="ANK 2">
    <location>
        <begin position="172"/>
        <end position="220"/>
    </location>
</feature>
<feature type="repeat" description="ANK 3">
    <location>
        <begin position="224"/>
        <end position="256"/>
    </location>
</feature>
<feature type="repeat" description="ANK 4">
    <location>
        <begin position="297"/>
        <end position="333"/>
    </location>
</feature>
<feature type="repeat" description="ANK 5">
    <location>
        <begin position="336"/>
        <end position="365"/>
    </location>
</feature>
<feature type="region of interest" description="PRANC/F-box-like">
    <location>
        <begin position="554"/>
        <end position="571"/>
    </location>
</feature>
<name>PG003_VAR67</name>
<evidence type="ECO:0000269" key="1">
    <source>
    </source>
</evidence>
<evidence type="ECO:0000305" key="2"/>
<reference key="1">
    <citation type="journal article" date="1991" name="Dokl. Akad. Nauk SSSR">
        <title>Creation of a clone library of fragments from the natural variola virus and study of the structural and functional organization of viral genes from a circle of hosts.</title>
        <authorList>
            <person name="Shchelkunov S.N."/>
            <person name="Marennikova S.S."/>
            <person name="Totmenin A.V."/>
            <person name="Blinov V.M."/>
            <person name="Chizhikov V.E."/>
            <person name="Gutorov V.V."/>
            <person name="Safronov P.F."/>
            <person name="Pozdnyakov S.G."/>
            <person name="Shelukhina E.M."/>
            <person name="Gashnikov P.V."/>
            <person name="Anjaparidze O.G."/>
            <person name="Sandakhchiev L.S."/>
        </authorList>
    </citation>
    <scope>NUCLEOTIDE SEQUENCE [GENOMIC DNA]</scope>
    <source>
        <strain>India-1967 / Isolate Ind3</strain>
    </source>
</reference>
<reference key="2">
    <citation type="journal article" date="2005" name="Virus Genes">
        <title>F-box-like domains are present in most poxvirus ankyrin repeat proteins.</title>
        <authorList>
            <person name="Mercer A.A."/>
            <person name="Fleming S.B."/>
            <person name="Ueda N."/>
        </authorList>
    </citation>
    <scope>DOMAIN</scope>
</reference>
<sequence>MDEIVNIVRDSMWFIPNVFMDNGENDGHVSVNNVCHMYFAFFDVDTSSHLFKLVIKHCDLNKQLKCGMSPLHCYVMNTRFKPSVLKILLHNGVNNFDNKDNKGHIPLHHYLIYSLSIDNKVFDILTDPIDDFSKSSDLLLCYLRYKFNGRLNYYVLYKLLTKGSDPNCVDEDGLTSLHYYCKHISAFHESNYYKSKSYTKMRAEKRFIYTIINHGANINAVTKIGNTPLHTYLQQYTKHSPRVVYALLSRGADTRIRNNFDCTPIMEYIKNDCVTGHILIMLLNWHEQKYGKLQKEEGHHLLYLFIKHNQGYGSHAFNILRYLLDRFDIQKDEYYNTMTPLHTAFQNCNNNVASYLVYIGYDINLPTKDDKTVFDLVFENRNILFNAGVIHNIIHHRLKVSLPMIKSLFYKMLEFSPYDDYYVKKIIAYCILRDESFTELHSKFCLNEDYKSVFMKNISFDKIDSIIKKCNWDISRLKDIQISDTNLYTVLRTEDIRYRTYLKAIHLDSHISFPMYDDLIEQCHLSMERKSKLVDKVLNKLKSTIDGQSRLSYLPPEIIRNIITKLSDYHLNSMLYGKNHYKYYT</sequence>
<accession>Q76QY7</accession>
<organism>
    <name type="scientific">Variola virus (isolate Human/India/Ind3/1967)</name>
    <name type="common">VARV</name>
    <name type="synonym">Smallpox virus</name>
    <dbReference type="NCBI Taxonomy" id="587200"/>
    <lineage>
        <taxon>Viruses</taxon>
        <taxon>Varidnaviria</taxon>
        <taxon>Bamfordvirae</taxon>
        <taxon>Nucleocytoviricota</taxon>
        <taxon>Pokkesviricetes</taxon>
        <taxon>Chitovirales</taxon>
        <taxon>Poxviridae</taxon>
        <taxon>Chordopoxvirinae</taxon>
        <taxon>Orthopoxvirus</taxon>
        <taxon>Variola virus</taxon>
    </lineage>
</organism>